<evidence type="ECO:0000250" key="1"/>
<evidence type="ECO:0000250" key="2">
    <source>
        <dbReference type="UniProtKB" id="Q3ZBF9"/>
    </source>
</evidence>
<evidence type="ECO:0000250" key="3">
    <source>
        <dbReference type="UniProtKB" id="Q96GD0"/>
    </source>
</evidence>
<evidence type="ECO:0000303" key="4">
    <source ref="2"/>
</evidence>
<evidence type="ECO:0000305" key="5"/>
<evidence type="ECO:0000312" key="6">
    <source>
        <dbReference type="RGD" id="1586212"/>
    </source>
</evidence>
<proteinExistence type="evidence at protein level"/>
<reference key="1">
    <citation type="journal article" date="2004" name="Nature">
        <title>Genome sequence of the Brown Norway rat yields insights into mammalian evolution.</title>
        <authorList>
            <person name="Gibbs R.A."/>
            <person name="Weinstock G.M."/>
            <person name="Metzker M.L."/>
            <person name="Muzny D.M."/>
            <person name="Sodergren E.J."/>
            <person name="Scherer S."/>
            <person name="Scott G."/>
            <person name="Steffen D."/>
            <person name="Worley K.C."/>
            <person name="Burch P.E."/>
            <person name="Okwuonu G."/>
            <person name="Hines S."/>
            <person name="Lewis L."/>
            <person name="Deramo C."/>
            <person name="Delgado O."/>
            <person name="Dugan-Rocha S."/>
            <person name="Miner G."/>
            <person name="Morgan M."/>
            <person name="Hawes A."/>
            <person name="Gill R."/>
            <person name="Holt R.A."/>
            <person name="Adams M.D."/>
            <person name="Amanatides P.G."/>
            <person name="Baden-Tillson H."/>
            <person name="Barnstead M."/>
            <person name="Chin S."/>
            <person name="Evans C.A."/>
            <person name="Ferriera S."/>
            <person name="Fosler C."/>
            <person name="Glodek A."/>
            <person name="Gu Z."/>
            <person name="Jennings D."/>
            <person name="Kraft C.L."/>
            <person name="Nguyen T."/>
            <person name="Pfannkoch C.M."/>
            <person name="Sitter C."/>
            <person name="Sutton G.G."/>
            <person name="Venter J.C."/>
            <person name="Woodage T."/>
            <person name="Smith D."/>
            <person name="Lee H.-M."/>
            <person name="Gustafson E."/>
            <person name="Cahill P."/>
            <person name="Kana A."/>
            <person name="Doucette-Stamm L."/>
            <person name="Weinstock K."/>
            <person name="Fechtel K."/>
            <person name="Weiss R.B."/>
            <person name="Dunn D.M."/>
            <person name="Green E.D."/>
            <person name="Blakesley R.W."/>
            <person name="Bouffard G.G."/>
            <person name="De Jong P.J."/>
            <person name="Osoegawa K."/>
            <person name="Zhu B."/>
            <person name="Marra M."/>
            <person name="Schein J."/>
            <person name="Bosdet I."/>
            <person name="Fjell C."/>
            <person name="Jones S."/>
            <person name="Krzywinski M."/>
            <person name="Mathewson C."/>
            <person name="Siddiqui A."/>
            <person name="Wye N."/>
            <person name="McPherson J."/>
            <person name="Zhao S."/>
            <person name="Fraser C.M."/>
            <person name="Shetty J."/>
            <person name="Shatsman S."/>
            <person name="Geer K."/>
            <person name="Chen Y."/>
            <person name="Abramzon S."/>
            <person name="Nierman W.C."/>
            <person name="Havlak P.H."/>
            <person name="Chen R."/>
            <person name="Durbin K.J."/>
            <person name="Egan A."/>
            <person name="Ren Y."/>
            <person name="Song X.-Z."/>
            <person name="Li B."/>
            <person name="Liu Y."/>
            <person name="Qin X."/>
            <person name="Cawley S."/>
            <person name="Cooney A.J."/>
            <person name="D'Souza L.M."/>
            <person name="Martin K."/>
            <person name="Wu J.Q."/>
            <person name="Gonzalez-Garay M.L."/>
            <person name="Jackson A.R."/>
            <person name="Kalafus K.J."/>
            <person name="McLeod M.P."/>
            <person name="Milosavljevic A."/>
            <person name="Virk D."/>
            <person name="Volkov A."/>
            <person name="Wheeler D.A."/>
            <person name="Zhang Z."/>
            <person name="Bailey J.A."/>
            <person name="Eichler E.E."/>
            <person name="Tuzun E."/>
            <person name="Birney E."/>
            <person name="Mongin E."/>
            <person name="Ureta-Vidal A."/>
            <person name="Woodwark C."/>
            <person name="Zdobnov E."/>
            <person name="Bork P."/>
            <person name="Suyama M."/>
            <person name="Torrents D."/>
            <person name="Alexandersson M."/>
            <person name="Trask B.J."/>
            <person name="Young J.M."/>
            <person name="Huang H."/>
            <person name="Wang H."/>
            <person name="Xing H."/>
            <person name="Daniels S."/>
            <person name="Gietzen D."/>
            <person name="Schmidt J."/>
            <person name="Stevens K."/>
            <person name="Vitt U."/>
            <person name="Wingrove J."/>
            <person name="Camara F."/>
            <person name="Mar Alba M."/>
            <person name="Abril J.F."/>
            <person name="Guigo R."/>
            <person name="Smit A."/>
            <person name="Dubchak I."/>
            <person name="Rubin E.M."/>
            <person name="Couronne O."/>
            <person name="Poliakov A."/>
            <person name="Huebner N."/>
            <person name="Ganten D."/>
            <person name="Goesele C."/>
            <person name="Hummel O."/>
            <person name="Kreitler T."/>
            <person name="Lee Y.-A."/>
            <person name="Monti J."/>
            <person name="Schulz H."/>
            <person name="Zimdahl H."/>
            <person name="Himmelbauer H."/>
            <person name="Lehrach H."/>
            <person name="Jacob H.J."/>
            <person name="Bromberg S."/>
            <person name="Gullings-Handley J."/>
            <person name="Jensen-Seaman M.I."/>
            <person name="Kwitek A.E."/>
            <person name="Lazar J."/>
            <person name="Pasko D."/>
            <person name="Tonellato P.J."/>
            <person name="Twigger S."/>
            <person name="Ponting C.P."/>
            <person name="Duarte J.M."/>
            <person name="Rice S."/>
            <person name="Goodstadt L."/>
            <person name="Beatson S.A."/>
            <person name="Emes R.D."/>
            <person name="Winter E.E."/>
            <person name="Webber C."/>
            <person name="Brandt P."/>
            <person name="Nyakatura G."/>
            <person name="Adetobi M."/>
            <person name="Chiaromonte F."/>
            <person name="Elnitski L."/>
            <person name="Eswara P."/>
            <person name="Hardison R.C."/>
            <person name="Hou M."/>
            <person name="Kolbe D."/>
            <person name="Makova K."/>
            <person name="Miller W."/>
            <person name="Nekrutenko A."/>
            <person name="Riemer C."/>
            <person name="Schwartz S."/>
            <person name="Taylor J."/>
            <person name="Yang S."/>
            <person name="Zhang Y."/>
            <person name="Lindpaintner K."/>
            <person name="Andrews T.D."/>
            <person name="Caccamo M."/>
            <person name="Clamp M."/>
            <person name="Clarke L."/>
            <person name="Curwen V."/>
            <person name="Durbin R.M."/>
            <person name="Eyras E."/>
            <person name="Searle S.M."/>
            <person name="Cooper G.M."/>
            <person name="Batzoglou S."/>
            <person name="Brudno M."/>
            <person name="Sidow A."/>
            <person name="Stone E.A."/>
            <person name="Payseur B.A."/>
            <person name="Bourque G."/>
            <person name="Lopez-Otin C."/>
            <person name="Puente X.S."/>
            <person name="Chakrabarti K."/>
            <person name="Chatterji S."/>
            <person name="Dewey C."/>
            <person name="Pachter L."/>
            <person name="Bray N."/>
            <person name="Yap V.B."/>
            <person name="Caspi A."/>
            <person name="Tesler G."/>
            <person name="Pevzner P.A."/>
            <person name="Haussler D."/>
            <person name="Roskin K.M."/>
            <person name="Baertsch R."/>
            <person name="Clawson H."/>
            <person name="Furey T.S."/>
            <person name="Hinrichs A.S."/>
            <person name="Karolchik D."/>
            <person name="Kent W.J."/>
            <person name="Rosenbloom K.R."/>
            <person name="Trumbower H."/>
            <person name="Weirauch M."/>
            <person name="Cooper D.N."/>
            <person name="Stenson P.D."/>
            <person name="Ma B."/>
            <person name="Brent M."/>
            <person name="Arumugam M."/>
            <person name="Shteynberg D."/>
            <person name="Copley R.R."/>
            <person name="Taylor M.S."/>
            <person name="Riethman H."/>
            <person name="Mudunuri U."/>
            <person name="Peterson J."/>
            <person name="Guyer M."/>
            <person name="Felsenfeld A."/>
            <person name="Old S."/>
            <person name="Mockrin S."/>
            <person name="Collins F.S."/>
        </authorList>
    </citation>
    <scope>NUCLEOTIDE SEQUENCE [LARGE SCALE GENOMIC DNA]</scope>
    <source>
        <strain>Brown Norway</strain>
    </source>
</reference>
<reference key="2">
    <citation type="submission" date="2000-11" db="EMBL/GenBank/DDBJ databases">
        <title>Isolation of cDNA clone from rat pancreas cDNA library by two hybrid system, clone 13.</title>
        <authorList>
            <person name="Wu H."/>
            <person name="Zenilman M.E."/>
        </authorList>
    </citation>
    <scope>NUCLEOTIDE SEQUENCE [MRNA] OF 106-309</scope>
    <source>
        <strain>Wistar</strain>
        <tissue>Pancreas</tissue>
    </source>
</reference>
<reference key="3">
    <citation type="submission" date="2007-04" db="UniProtKB">
        <authorList>
            <person name="Lubec G."/>
            <person name="Chen W.-Q."/>
        </authorList>
    </citation>
    <scope>PROTEIN SEQUENCE OF 129-138; 141-154; 186-202 AND 236-245</scope>
    <scope>IDENTIFICATION BY MASS SPECTROMETRY</scope>
    <source>
        <strain>Sprague-Dawley</strain>
        <tissue>Hippocampus</tissue>
    </source>
</reference>
<sequence>MARCERLRGAALRDVLGQAQGVLFDCDGVLWNGERIVPGAPELLQRLAQAGKATLFVSNNSRRARPELALRFARLGFTGLRAEELFSSAVCAARLLRQRLPGPPDAPGAVFVLGGEGLRAELRAAGLRLAGDPGDDPRVRAVLVGYDEHFSFAKLTEACAHLRDPDCLLVATDRDPWHPLTDGSRTPGTGSLAAAVETASGRQALVVGKPSPYMFQCITEDFSVDPARMLMVGDRLETDILFGHRCGMTTVLTLTGVSSLEEAQAYLAAGQHDLVPHYYVESIADLMEGLGGLSPPPQFPDPVDGGYRP</sequence>
<name>PLPP_RAT</name>
<keyword id="KW-1003">Cell membrane</keyword>
<keyword id="KW-0966">Cell projection</keyword>
<keyword id="KW-0963">Cytoplasm</keyword>
<keyword id="KW-0206">Cytoskeleton</keyword>
<keyword id="KW-0903">Direct protein sequencing</keyword>
<keyword id="KW-0378">Hydrolase</keyword>
<keyword id="KW-0460">Magnesium</keyword>
<keyword id="KW-0472">Membrane</keyword>
<keyword id="KW-0479">Metal-binding</keyword>
<keyword id="KW-0663">Pyridoxal phosphate</keyword>
<keyword id="KW-1185">Reference proteome</keyword>
<feature type="chain" id="PRO_0000068839" description="Chronophin">
    <location>
        <begin position="1"/>
        <end position="309"/>
    </location>
</feature>
<feature type="active site" description="Nucleophile" evidence="3">
    <location>
        <position position="25"/>
    </location>
</feature>
<feature type="active site" description="Proton donor" evidence="3">
    <location>
        <position position="27"/>
    </location>
</feature>
<feature type="binding site" evidence="3">
    <location>
        <position position="25"/>
    </location>
    <ligand>
        <name>Mg(2+)</name>
        <dbReference type="ChEBI" id="CHEBI:18420"/>
    </ligand>
</feature>
<feature type="binding site" evidence="3">
    <location>
        <position position="27"/>
    </location>
    <ligand>
        <name>Mg(2+)</name>
        <dbReference type="ChEBI" id="CHEBI:18420"/>
    </ligand>
</feature>
<feature type="binding site" evidence="3">
    <location>
        <begin position="58"/>
        <end position="60"/>
    </location>
    <ligand>
        <name>substrate</name>
    </ligand>
</feature>
<feature type="binding site" evidence="3">
    <location>
        <position position="178"/>
    </location>
    <ligand>
        <name>substrate</name>
    </ligand>
</feature>
<feature type="binding site" evidence="3">
    <location>
        <position position="209"/>
    </location>
    <ligand>
        <name>substrate</name>
    </ligand>
</feature>
<feature type="binding site" evidence="3">
    <location>
        <position position="234"/>
    </location>
    <ligand>
        <name>Mg(2+)</name>
        <dbReference type="ChEBI" id="CHEBI:18420"/>
    </ligand>
</feature>
<feature type="sequence conflict" description="In Ref. 2; AAL37168." evidence="5" ref="2">
    <original>APG</original>
    <variation>GTR</variation>
    <location>
        <begin position="106"/>
        <end position="108"/>
    </location>
</feature>
<protein>
    <recommendedName>
        <fullName evidence="3">Chronophin</fullName>
        <ecNumber evidence="2">3.1.3.16</ecNumber>
        <ecNumber evidence="3">3.1.3.74</ecNumber>
    </recommendedName>
    <alternativeName>
        <fullName evidence="3">Pyridoxal phosphate phosphatase</fullName>
        <shortName evidence="3">PLP phosphatase</shortName>
    </alternativeName>
    <alternativeName>
        <fullName evidence="4">Reg I-binding protein 1</fullName>
    </alternativeName>
</protein>
<accession>Q8VD52</accession>
<organism>
    <name type="scientific">Rattus norvegicus</name>
    <name type="common">Rat</name>
    <dbReference type="NCBI Taxonomy" id="10116"/>
    <lineage>
        <taxon>Eukaryota</taxon>
        <taxon>Metazoa</taxon>
        <taxon>Chordata</taxon>
        <taxon>Craniata</taxon>
        <taxon>Vertebrata</taxon>
        <taxon>Euteleostomi</taxon>
        <taxon>Mammalia</taxon>
        <taxon>Eutheria</taxon>
        <taxon>Euarchontoglires</taxon>
        <taxon>Glires</taxon>
        <taxon>Rodentia</taxon>
        <taxon>Myomorpha</taxon>
        <taxon>Muroidea</taxon>
        <taxon>Muridae</taxon>
        <taxon>Murinae</taxon>
        <taxon>Rattus</taxon>
    </lineage>
</organism>
<gene>
    <name evidence="6" type="primary">Pdxp</name>
    <name type="synonym">Cin</name>
    <name type="synonym">Plp</name>
    <name type="synonym">Plpp</name>
    <name evidence="4" type="synonym">Rbp1</name>
</gene>
<comment type="function">
    <text evidence="3">Functions as a pyridoxal phosphate (PLP) phosphatase, which also catalyzes the dephosphorylation of pyridoxine 5'-phosphate (PNP) and pyridoxamine 5'-phosphate (PMP), with order of substrate preference PLP &gt; PNP &gt; PMP and therefore plays a role in vitamin B6 metabolism. Also functions as a protein serine phosphatase that specifically dephosphorylates 'Ser-3' in proteins of the actin-depolymerizing factor (ADF)/cofilin family like CFL1 and DSTN. Thereby, regulates cofilin-dependent actin cytoskeleton reorganization, being required for normal progress through mitosis and normal cytokinesis. Does not dephosphorylate phosphothreonines in LIMK1. Does not dephosphorylate peptides containing phosphotyrosine.</text>
</comment>
<comment type="catalytic activity">
    <reaction evidence="3">
        <text>pyridoxal 5'-phosphate + H2O = pyridoxal + phosphate</text>
        <dbReference type="Rhea" id="RHEA:20533"/>
        <dbReference type="ChEBI" id="CHEBI:15377"/>
        <dbReference type="ChEBI" id="CHEBI:17310"/>
        <dbReference type="ChEBI" id="CHEBI:43474"/>
        <dbReference type="ChEBI" id="CHEBI:597326"/>
        <dbReference type="EC" id="3.1.3.74"/>
    </reaction>
    <physiologicalReaction direction="left-to-right" evidence="3">
        <dbReference type="Rhea" id="RHEA:20534"/>
    </physiologicalReaction>
</comment>
<comment type="catalytic activity">
    <reaction evidence="3">
        <text>pyridoxine 5'-phosphate + H2O = pyridoxine + phosphate</text>
        <dbReference type="Rhea" id="RHEA:25112"/>
        <dbReference type="ChEBI" id="CHEBI:15377"/>
        <dbReference type="ChEBI" id="CHEBI:16709"/>
        <dbReference type="ChEBI" id="CHEBI:43474"/>
        <dbReference type="ChEBI" id="CHEBI:58589"/>
        <dbReference type="EC" id="3.1.3.74"/>
    </reaction>
    <physiologicalReaction direction="left-to-right" evidence="3">
        <dbReference type="Rhea" id="RHEA:25113"/>
    </physiologicalReaction>
</comment>
<comment type="catalytic activity">
    <reaction evidence="3">
        <text>pyridoxamine + phosphate = pyridoxamine 5'-phosphate + H2O</text>
        <dbReference type="Rhea" id="RHEA:25135"/>
        <dbReference type="ChEBI" id="CHEBI:15377"/>
        <dbReference type="ChEBI" id="CHEBI:43474"/>
        <dbReference type="ChEBI" id="CHEBI:57761"/>
        <dbReference type="ChEBI" id="CHEBI:58451"/>
        <dbReference type="EC" id="3.1.3.74"/>
    </reaction>
    <physiologicalReaction direction="right-to-left" evidence="3">
        <dbReference type="Rhea" id="RHEA:25137"/>
    </physiologicalReaction>
</comment>
<comment type="catalytic activity">
    <reaction evidence="3">
        <text>O-phospho-L-seryl-[protein] + H2O = L-seryl-[protein] + phosphate</text>
        <dbReference type="Rhea" id="RHEA:20629"/>
        <dbReference type="Rhea" id="RHEA-COMP:9863"/>
        <dbReference type="Rhea" id="RHEA-COMP:11604"/>
        <dbReference type="ChEBI" id="CHEBI:15377"/>
        <dbReference type="ChEBI" id="CHEBI:29999"/>
        <dbReference type="ChEBI" id="CHEBI:43474"/>
        <dbReference type="ChEBI" id="CHEBI:83421"/>
        <dbReference type="EC" id="3.1.3.16"/>
    </reaction>
    <physiologicalReaction direction="left-to-right" evidence="3">
        <dbReference type="Rhea" id="RHEA:20630"/>
    </physiologicalReaction>
</comment>
<comment type="cofactor">
    <cofactor evidence="3">
        <name>Mg(2+)</name>
        <dbReference type="ChEBI" id="CHEBI:18420"/>
    </cofactor>
    <text evidence="3">Divalent metal ions. Mg(2+) is the most effective.</text>
</comment>
<comment type="subunit">
    <text evidence="3">Homodimer.</text>
</comment>
<comment type="subcellular location">
    <subcellularLocation>
        <location evidence="3">Cytoplasm</location>
        <location evidence="3">Cytosol</location>
    </subcellularLocation>
    <subcellularLocation>
        <location evidence="3">Cytoplasm</location>
        <location evidence="3">Cytoskeleton</location>
    </subcellularLocation>
    <subcellularLocation>
        <location evidence="3">Cell projection</location>
        <location evidence="3">Ruffle membrane</location>
        <topology evidence="1 3">Peripheral membrane protein</topology>
        <orientation evidence="3">Cytoplasmic side</orientation>
    </subcellularLocation>
    <subcellularLocation>
        <location evidence="3">Cell projection</location>
        <location evidence="3">Lamellipodium membrane</location>
        <topology evidence="3">Peripheral membrane protein</topology>
        <orientation evidence="3">Cytoplasmic side</orientation>
    </subcellularLocation>
    <subcellularLocation>
        <location evidence="3">Cell membrane</location>
        <topology evidence="3">Peripheral membrane protein</topology>
        <orientation evidence="3">Cytoplasmic side</orientation>
    </subcellularLocation>
    <text evidence="3">Colocalizes with the actin cytoskeleton in membrane ruffles and lamellipodia. Diffusely distributed throughout the cytosol during pro-metaphase and metaphase. Detected at the dynamic cell poles during telophase. Detected at the cleavage furrow and contractile ring during cytokinesis. Transiently detected at the plasma membrane in late stages of cytokinesis. Detected at the midbody.</text>
</comment>
<comment type="similarity">
    <text evidence="5">Belongs to the HAD-like hydrolase superfamily.</text>
</comment>
<dbReference type="EC" id="3.1.3.16" evidence="2"/>
<dbReference type="EC" id="3.1.3.74" evidence="3"/>
<dbReference type="EMBL" id="AABR03056024">
    <property type="status" value="NOT_ANNOTATED_CDS"/>
    <property type="molecule type" value="Genomic_DNA"/>
</dbReference>
<dbReference type="EMBL" id="AF318578">
    <property type="protein sequence ID" value="AAL37168.1"/>
    <property type="molecule type" value="mRNA"/>
</dbReference>
<dbReference type="SMR" id="Q8VD52"/>
<dbReference type="FunCoup" id="Q8VD52">
    <property type="interactions" value="239"/>
</dbReference>
<dbReference type="STRING" id="10116.ENSRNOP00000064092"/>
<dbReference type="PhosphoSitePlus" id="Q8VD52"/>
<dbReference type="jPOST" id="Q8VD52"/>
<dbReference type="PaxDb" id="10116-ENSRNOP00000064092"/>
<dbReference type="UCSC" id="RGD:1586212">
    <property type="organism name" value="rat"/>
</dbReference>
<dbReference type="AGR" id="RGD:1586212"/>
<dbReference type="RGD" id="1586212">
    <property type="gene designation" value="Pdxp"/>
</dbReference>
<dbReference type="eggNOG" id="KOG2882">
    <property type="taxonomic scope" value="Eukaryota"/>
</dbReference>
<dbReference type="InParanoid" id="Q8VD52"/>
<dbReference type="PhylomeDB" id="Q8VD52"/>
<dbReference type="PRO" id="PR:Q8VD52"/>
<dbReference type="Proteomes" id="UP000002494">
    <property type="component" value="Unplaced"/>
</dbReference>
<dbReference type="GO" id="GO:0015629">
    <property type="term" value="C:actin cytoskeleton"/>
    <property type="evidence" value="ECO:0000266"/>
    <property type="project" value="RGD"/>
</dbReference>
<dbReference type="GO" id="GO:0005911">
    <property type="term" value="C:cell-cell junction"/>
    <property type="evidence" value="ECO:0000266"/>
    <property type="project" value="RGD"/>
</dbReference>
<dbReference type="GO" id="GO:0032154">
    <property type="term" value="C:cleavage furrow"/>
    <property type="evidence" value="ECO:0000266"/>
    <property type="project" value="RGD"/>
</dbReference>
<dbReference type="GO" id="GO:0070938">
    <property type="term" value="C:contractile ring"/>
    <property type="evidence" value="ECO:0000266"/>
    <property type="project" value="RGD"/>
</dbReference>
<dbReference type="GO" id="GO:0005737">
    <property type="term" value="C:cytoplasm"/>
    <property type="evidence" value="ECO:0000318"/>
    <property type="project" value="GO_Central"/>
</dbReference>
<dbReference type="GO" id="GO:0005829">
    <property type="term" value="C:cytosol"/>
    <property type="evidence" value="ECO:0000250"/>
    <property type="project" value="UniProtKB"/>
</dbReference>
<dbReference type="GO" id="GO:0098978">
    <property type="term" value="C:glutamatergic synapse"/>
    <property type="evidence" value="ECO:0000266"/>
    <property type="project" value="RGD"/>
</dbReference>
<dbReference type="GO" id="GO:0030027">
    <property type="term" value="C:lamellipodium"/>
    <property type="evidence" value="ECO:0000266"/>
    <property type="project" value="RGD"/>
</dbReference>
<dbReference type="GO" id="GO:0031258">
    <property type="term" value="C:lamellipodium membrane"/>
    <property type="evidence" value="ECO:0007669"/>
    <property type="project" value="UniProtKB-SubCell"/>
</dbReference>
<dbReference type="GO" id="GO:0030496">
    <property type="term" value="C:midbody"/>
    <property type="evidence" value="ECO:0000266"/>
    <property type="project" value="RGD"/>
</dbReference>
<dbReference type="GO" id="GO:0005886">
    <property type="term" value="C:plasma membrane"/>
    <property type="evidence" value="ECO:0000266"/>
    <property type="project" value="RGD"/>
</dbReference>
<dbReference type="GO" id="GO:0098794">
    <property type="term" value="C:postsynapse"/>
    <property type="evidence" value="ECO:0000266"/>
    <property type="project" value="RGD"/>
</dbReference>
<dbReference type="GO" id="GO:0032587">
    <property type="term" value="C:ruffle membrane"/>
    <property type="evidence" value="ECO:0000266"/>
    <property type="project" value="RGD"/>
</dbReference>
<dbReference type="GO" id="GO:0019838">
    <property type="term" value="F:growth factor binding"/>
    <property type="evidence" value="ECO:0000353"/>
    <property type="project" value="RGD"/>
</dbReference>
<dbReference type="GO" id="GO:0031072">
    <property type="term" value="F:heat shock protein binding"/>
    <property type="evidence" value="ECO:0000266"/>
    <property type="project" value="RGD"/>
</dbReference>
<dbReference type="GO" id="GO:0000287">
    <property type="term" value="F:magnesium ion binding"/>
    <property type="evidence" value="ECO:0000250"/>
    <property type="project" value="UniProtKB"/>
</dbReference>
<dbReference type="GO" id="GO:0004721">
    <property type="term" value="F:phosphoprotein phosphatase activity"/>
    <property type="evidence" value="ECO:0000250"/>
    <property type="project" value="UniProtKB"/>
</dbReference>
<dbReference type="GO" id="GO:0042803">
    <property type="term" value="F:protein homodimerization activity"/>
    <property type="evidence" value="ECO:0000266"/>
    <property type="project" value="RGD"/>
</dbReference>
<dbReference type="GO" id="GO:0004722">
    <property type="term" value="F:protein serine/threonine phosphatase activity"/>
    <property type="evidence" value="ECO:0007669"/>
    <property type="project" value="UniProtKB-EC"/>
</dbReference>
<dbReference type="GO" id="GO:0033883">
    <property type="term" value="F:pyridoxal phosphatase activity"/>
    <property type="evidence" value="ECO:0000250"/>
    <property type="project" value="UniProtKB"/>
</dbReference>
<dbReference type="GO" id="GO:0031247">
    <property type="term" value="P:actin rod assembly"/>
    <property type="evidence" value="ECO:0000266"/>
    <property type="project" value="RGD"/>
</dbReference>
<dbReference type="GO" id="GO:0071318">
    <property type="term" value="P:cellular response to ATP"/>
    <property type="evidence" value="ECO:0000266"/>
    <property type="project" value="RGD"/>
</dbReference>
<dbReference type="GO" id="GO:0030836">
    <property type="term" value="P:positive regulation of actin filament depolymerization"/>
    <property type="evidence" value="ECO:0000250"/>
    <property type="project" value="UniProtKB"/>
</dbReference>
<dbReference type="GO" id="GO:0006470">
    <property type="term" value="P:protein dephosphorylation"/>
    <property type="evidence" value="ECO:0000250"/>
    <property type="project" value="UniProtKB"/>
</dbReference>
<dbReference type="GO" id="GO:0032361">
    <property type="term" value="P:pyridoxal phosphate catabolic process"/>
    <property type="evidence" value="ECO:0000250"/>
    <property type="project" value="UniProtKB"/>
</dbReference>
<dbReference type="GO" id="GO:0032465">
    <property type="term" value="P:regulation of cytokinesis"/>
    <property type="evidence" value="ECO:0000250"/>
    <property type="project" value="UniProtKB"/>
</dbReference>
<dbReference type="GO" id="GO:0007088">
    <property type="term" value="P:regulation of mitotic nuclear division"/>
    <property type="evidence" value="ECO:0000250"/>
    <property type="project" value="UniProtKB"/>
</dbReference>
<dbReference type="GO" id="GO:0099159">
    <property type="term" value="P:regulation of modification of postsynaptic structure"/>
    <property type="evidence" value="ECO:0000266"/>
    <property type="project" value="RGD"/>
</dbReference>
<dbReference type="CDD" id="cd07510">
    <property type="entry name" value="HAD_Pase_UmpH-like"/>
    <property type="match status" value="1"/>
</dbReference>
<dbReference type="FunFam" id="3.40.50.1000:FF:000140">
    <property type="entry name" value="Pyridoxal phosphate phosphatase"/>
    <property type="match status" value="1"/>
</dbReference>
<dbReference type="FunFam" id="3.40.50.1000:FF:000163">
    <property type="entry name" value="Pyridoxal phosphate phosphatase"/>
    <property type="match status" value="1"/>
</dbReference>
<dbReference type="Gene3D" id="3.40.50.1000">
    <property type="entry name" value="HAD superfamily/HAD-like"/>
    <property type="match status" value="2"/>
</dbReference>
<dbReference type="InterPro" id="IPR036412">
    <property type="entry name" value="HAD-like_sf"/>
</dbReference>
<dbReference type="InterPro" id="IPR006357">
    <property type="entry name" value="HAD-SF_hydro_IIA"/>
</dbReference>
<dbReference type="InterPro" id="IPR023214">
    <property type="entry name" value="HAD_sf"/>
</dbReference>
<dbReference type="InterPro" id="IPR006349">
    <property type="entry name" value="PGP_euk"/>
</dbReference>
<dbReference type="NCBIfam" id="TIGR01460">
    <property type="entry name" value="HAD-SF-IIA"/>
    <property type="match status" value="1"/>
</dbReference>
<dbReference type="NCBIfam" id="TIGR01452">
    <property type="entry name" value="PGP_euk"/>
    <property type="match status" value="1"/>
</dbReference>
<dbReference type="PANTHER" id="PTHR19288">
    <property type="entry name" value="4-NITROPHENYLPHOSPHATASE-RELATED"/>
    <property type="match status" value="1"/>
</dbReference>
<dbReference type="PANTHER" id="PTHR19288:SF94">
    <property type="entry name" value="CHRONOPHIN"/>
    <property type="match status" value="1"/>
</dbReference>
<dbReference type="Pfam" id="PF13344">
    <property type="entry name" value="Hydrolase_6"/>
    <property type="match status" value="1"/>
</dbReference>
<dbReference type="Pfam" id="PF13242">
    <property type="entry name" value="Hydrolase_like"/>
    <property type="match status" value="1"/>
</dbReference>
<dbReference type="PIRSF" id="PIRSF000915">
    <property type="entry name" value="PGP-type_phosphatase"/>
    <property type="match status" value="1"/>
</dbReference>
<dbReference type="SFLD" id="SFLDG01139">
    <property type="entry name" value="C2.A:_Pyridoxal_Phosphate_Phos"/>
    <property type="match status" value="1"/>
</dbReference>
<dbReference type="SFLD" id="SFLDS00003">
    <property type="entry name" value="Haloacid_Dehalogenase"/>
    <property type="match status" value="1"/>
</dbReference>
<dbReference type="SUPFAM" id="SSF56784">
    <property type="entry name" value="HAD-like"/>
    <property type="match status" value="1"/>
</dbReference>